<protein>
    <recommendedName>
        <fullName>Thymidine phosphorylase</fullName>
        <ecNumber>2.4.2.4</ecNumber>
    </recommendedName>
    <alternativeName>
        <fullName>TdRPase</fullName>
    </alternativeName>
</protein>
<gene>
    <name type="primary">deoA</name>
</gene>
<sequence>DKKIYALRDVTGTVQSIPLIASSIMSKKLATGSNCILLDVKCGNGAFMKDINEAKKLGKLMIEIGKKLNRKIAVEITNMQQPLGKTIGNKIEVLEAIDTLNGHGPKDFTEIIYSSGSTLLVLAQKAKDEVEARKMIDEVINNKKAYNKFLEWISRQGGNIKVFEKDSKWFNPQYKQEIIASQSGYLKIKSRIDFGLVAMKLGAGRSKKEDSIDYEAGIYLNKSSNEYVNKGDVLFTMYSSKPINPELQKELLSAIEFSESKHDIQTVFAKLM</sequence>
<organism>
    <name type="scientific">Metamycoplasma hominis</name>
    <name type="common">Mycoplasma hominis</name>
    <dbReference type="NCBI Taxonomy" id="2098"/>
    <lineage>
        <taxon>Bacteria</taxon>
        <taxon>Bacillati</taxon>
        <taxon>Mycoplasmatota</taxon>
        <taxon>Mycoplasmoidales</taxon>
        <taxon>Metamycoplasmataceae</taxon>
        <taxon>Metamycoplasma</taxon>
    </lineage>
</organism>
<accession>P43050</accession>
<keyword id="KW-0328">Glycosyltransferase</keyword>
<keyword id="KW-0808">Transferase</keyword>
<reference key="1">
    <citation type="thesis" date="1993" institute="Heinrich-Heine University / Duesseldorf" country="Germany">
        <authorList>
            <person name="Schuchart K."/>
        </authorList>
    </citation>
    <scope>NUCLEOTIDE SEQUENCE [GENOMIC DNA]</scope>
    <source>
        <strain>FBG</strain>
    </source>
</reference>
<feature type="chain" id="PRO_0000059079" description="Thymidine phosphorylase">
    <location>
        <begin position="1" status="less than"/>
        <end position="272"/>
    </location>
</feature>
<feature type="non-terminal residue">
    <location>
        <position position="1"/>
    </location>
</feature>
<comment type="function">
    <text>The enzymes which catalyze the reversible phosphorolysis of pyrimidine nucleosides are involved in the degradation of these compounds and in their utilization as carbon and energy sources, or in the rescue of pyrimidine bases for nucleotide synthesis.</text>
</comment>
<comment type="catalytic activity">
    <reaction>
        <text>thymidine + phosphate = 2-deoxy-alpha-D-ribose 1-phosphate + thymine</text>
        <dbReference type="Rhea" id="RHEA:16037"/>
        <dbReference type="ChEBI" id="CHEBI:17748"/>
        <dbReference type="ChEBI" id="CHEBI:17821"/>
        <dbReference type="ChEBI" id="CHEBI:43474"/>
        <dbReference type="ChEBI" id="CHEBI:57259"/>
        <dbReference type="EC" id="2.4.2.4"/>
    </reaction>
</comment>
<comment type="subunit">
    <text evidence="1">Homodimer.</text>
</comment>
<comment type="similarity">
    <text evidence="2">Belongs to the thymidine/pyrimidine-nucleoside phosphorylase family.</text>
</comment>
<dbReference type="EC" id="2.4.2.4"/>
<dbReference type="EMBL" id="Z27121">
    <property type="protein sequence ID" value="CAA81645.1"/>
    <property type="molecule type" value="Genomic_DNA"/>
</dbReference>
<dbReference type="SMR" id="P43050"/>
<dbReference type="GO" id="GO:0005829">
    <property type="term" value="C:cytosol"/>
    <property type="evidence" value="ECO:0007669"/>
    <property type="project" value="TreeGrafter"/>
</dbReference>
<dbReference type="GO" id="GO:0004645">
    <property type="term" value="F:1,4-alpha-oligoglucan phosphorylase activity"/>
    <property type="evidence" value="ECO:0007669"/>
    <property type="project" value="InterPro"/>
</dbReference>
<dbReference type="GO" id="GO:0009032">
    <property type="term" value="F:thymidine phosphorylase activity"/>
    <property type="evidence" value="ECO:0007669"/>
    <property type="project" value="UniProtKB-EC"/>
</dbReference>
<dbReference type="GO" id="GO:0006206">
    <property type="term" value="P:pyrimidine nucleobase metabolic process"/>
    <property type="evidence" value="ECO:0007669"/>
    <property type="project" value="InterPro"/>
</dbReference>
<dbReference type="GO" id="GO:0006213">
    <property type="term" value="P:pyrimidine nucleoside metabolic process"/>
    <property type="evidence" value="ECO:0007669"/>
    <property type="project" value="InterPro"/>
</dbReference>
<dbReference type="Gene3D" id="3.40.1030.10">
    <property type="entry name" value="Nucleoside phosphorylase/phosphoribosyltransferase catalytic domain"/>
    <property type="match status" value="1"/>
</dbReference>
<dbReference type="Gene3D" id="3.90.1170.30">
    <property type="entry name" value="Pyrimidine nucleoside phosphorylase-like, C-terminal domain"/>
    <property type="match status" value="1"/>
</dbReference>
<dbReference type="InterPro" id="IPR000312">
    <property type="entry name" value="Glycosyl_Trfase_fam3"/>
</dbReference>
<dbReference type="InterPro" id="IPR035902">
    <property type="entry name" value="Nuc_phospho_transferase"/>
</dbReference>
<dbReference type="InterPro" id="IPR036566">
    <property type="entry name" value="PYNP-like_C_sf"/>
</dbReference>
<dbReference type="InterPro" id="IPR013102">
    <property type="entry name" value="PYNP_C"/>
</dbReference>
<dbReference type="InterPro" id="IPR000053">
    <property type="entry name" value="Thymidine/pyrmidine_PPase"/>
</dbReference>
<dbReference type="PANTHER" id="PTHR10515">
    <property type="entry name" value="THYMIDINE PHOSPHORYLASE"/>
    <property type="match status" value="1"/>
</dbReference>
<dbReference type="PANTHER" id="PTHR10515:SF0">
    <property type="entry name" value="THYMIDINE PHOSPHORYLASE"/>
    <property type="match status" value="1"/>
</dbReference>
<dbReference type="Pfam" id="PF00591">
    <property type="entry name" value="Glycos_transf_3"/>
    <property type="match status" value="1"/>
</dbReference>
<dbReference type="Pfam" id="PF07831">
    <property type="entry name" value="PYNP_C"/>
    <property type="match status" value="1"/>
</dbReference>
<dbReference type="SMART" id="SM00941">
    <property type="entry name" value="PYNP_C"/>
    <property type="match status" value="1"/>
</dbReference>
<dbReference type="SUPFAM" id="SSF52418">
    <property type="entry name" value="Nucleoside phosphorylase/phosphoribosyltransferase catalytic domain"/>
    <property type="match status" value="1"/>
</dbReference>
<dbReference type="SUPFAM" id="SSF54680">
    <property type="entry name" value="Pyrimidine nucleoside phosphorylase C-terminal domain"/>
    <property type="match status" value="1"/>
</dbReference>
<evidence type="ECO:0000250" key="1"/>
<evidence type="ECO:0000305" key="2"/>
<name>TYPH_METHO</name>
<proteinExistence type="inferred from homology"/>